<keyword id="KW-0028">Amino-acid biosynthesis</keyword>
<keyword id="KW-0057">Aromatic amino acid biosynthesis</keyword>
<keyword id="KW-0413">Isomerase</keyword>
<keyword id="KW-1185">Reference proteome</keyword>
<keyword id="KW-0822">Tryptophan biosynthesis</keyword>
<feature type="chain" id="PRO_1000095938" description="N-(5'-phosphoribosyl)anthranilate isomerase">
    <location>
        <begin position="1"/>
        <end position="212"/>
    </location>
</feature>
<dbReference type="EC" id="5.3.1.24" evidence="1"/>
<dbReference type="EMBL" id="CP000804">
    <property type="protein sequence ID" value="ABU60429.1"/>
    <property type="molecule type" value="Genomic_DNA"/>
</dbReference>
<dbReference type="RefSeq" id="WP_012122850.1">
    <property type="nucleotide sequence ID" value="NC_009767.1"/>
</dbReference>
<dbReference type="SMR" id="A7NS83"/>
<dbReference type="STRING" id="383372.Rcas_4413"/>
<dbReference type="KEGG" id="rca:Rcas_4413"/>
<dbReference type="eggNOG" id="COG0135">
    <property type="taxonomic scope" value="Bacteria"/>
</dbReference>
<dbReference type="HOGENOM" id="CLU_076364_1_0_0"/>
<dbReference type="OrthoDB" id="9786954at2"/>
<dbReference type="UniPathway" id="UPA00035">
    <property type="reaction ID" value="UER00042"/>
</dbReference>
<dbReference type="Proteomes" id="UP000000263">
    <property type="component" value="Chromosome"/>
</dbReference>
<dbReference type="GO" id="GO:0004640">
    <property type="term" value="F:phosphoribosylanthranilate isomerase activity"/>
    <property type="evidence" value="ECO:0007669"/>
    <property type="project" value="UniProtKB-UniRule"/>
</dbReference>
<dbReference type="GO" id="GO:0000162">
    <property type="term" value="P:L-tryptophan biosynthetic process"/>
    <property type="evidence" value="ECO:0007669"/>
    <property type="project" value="UniProtKB-UniRule"/>
</dbReference>
<dbReference type="CDD" id="cd00405">
    <property type="entry name" value="PRAI"/>
    <property type="match status" value="1"/>
</dbReference>
<dbReference type="Gene3D" id="3.20.20.70">
    <property type="entry name" value="Aldolase class I"/>
    <property type="match status" value="1"/>
</dbReference>
<dbReference type="HAMAP" id="MF_00135">
    <property type="entry name" value="PRAI"/>
    <property type="match status" value="1"/>
</dbReference>
<dbReference type="InterPro" id="IPR013785">
    <property type="entry name" value="Aldolase_TIM"/>
</dbReference>
<dbReference type="InterPro" id="IPR001240">
    <property type="entry name" value="PRAI_dom"/>
</dbReference>
<dbReference type="InterPro" id="IPR011060">
    <property type="entry name" value="RibuloseP-bd_barrel"/>
</dbReference>
<dbReference type="InterPro" id="IPR044643">
    <property type="entry name" value="TrpF_fam"/>
</dbReference>
<dbReference type="PANTHER" id="PTHR42894">
    <property type="entry name" value="N-(5'-PHOSPHORIBOSYL)ANTHRANILATE ISOMERASE"/>
    <property type="match status" value="1"/>
</dbReference>
<dbReference type="PANTHER" id="PTHR42894:SF1">
    <property type="entry name" value="N-(5'-PHOSPHORIBOSYL)ANTHRANILATE ISOMERASE"/>
    <property type="match status" value="1"/>
</dbReference>
<dbReference type="Pfam" id="PF00697">
    <property type="entry name" value="PRAI"/>
    <property type="match status" value="1"/>
</dbReference>
<dbReference type="SUPFAM" id="SSF51366">
    <property type="entry name" value="Ribulose-phoshate binding barrel"/>
    <property type="match status" value="1"/>
</dbReference>
<proteinExistence type="inferred from homology"/>
<evidence type="ECO:0000255" key="1">
    <source>
        <dbReference type="HAMAP-Rule" id="MF_00135"/>
    </source>
</evidence>
<protein>
    <recommendedName>
        <fullName evidence="1">N-(5'-phosphoribosyl)anthranilate isomerase</fullName>
        <shortName evidence="1">PRAI</shortName>
        <ecNumber evidence="1">5.3.1.24</ecNumber>
    </recommendedName>
</protein>
<gene>
    <name evidence="1" type="primary">trpF</name>
    <name type="ordered locus">Rcas_4413</name>
</gene>
<accession>A7NS83</accession>
<organism>
    <name type="scientific">Roseiflexus castenholzii (strain DSM 13941 / HLO8)</name>
    <dbReference type="NCBI Taxonomy" id="383372"/>
    <lineage>
        <taxon>Bacteria</taxon>
        <taxon>Bacillati</taxon>
        <taxon>Chloroflexota</taxon>
        <taxon>Chloroflexia</taxon>
        <taxon>Chloroflexales</taxon>
        <taxon>Roseiflexineae</taxon>
        <taxon>Roseiflexaceae</taxon>
        <taxon>Roseiflexus</taxon>
    </lineage>
</organism>
<reference key="1">
    <citation type="submission" date="2007-08" db="EMBL/GenBank/DDBJ databases">
        <title>Complete sequence of Roseiflexus castenholzii DSM 13941.</title>
        <authorList>
            <consortium name="US DOE Joint Genome Institute"/>
            <person name="Copeland A."/>
            <person name="Lucas S."/>
            <person name="Lapidus A."/>
            <person name="Barry K."/>
            <person name="Glavina del Rio T."/>
            <person name="Dalin E."/>
            <person name="Tice H."/>
            <person name="Pitluck S."/>
            <person name="Thompson L.S."/>
            <person name="Brettin T."/>
            <person name="Bruce D."/>
            <person name="Detter J.C."/>
            <person name="Han C."/>
            <person name="Tapia R."/>
            <person name="Schmutz J."/>
            <person name="Larimer F."/>
            <person name="Land M."/>
            <person name="Hauser L."/>
            <person name="Kyrpides N."/>
            <person name="Mikhailova N."/>
            <person name="Bryant D.A."/>
            <person name="Hanada S."/>
            <person name="Tsukatani Y."/>
            <person name="Richardson P."/>
        </authorList>
    </citation>
    <scope>NUCLEOTIDE SEQUENCE [LARGE SCALE GENOMIC DNA]</scope>
    <source>
        <strain>DSM 13941 / HLO8</strain>
    </source>
</reference>
<name>TRPF_ROSCS</name>
<sequence>MIIKICGVRARDHALTAVDAGADMLGLVFAPSRRQITVEDAASIAEAARFAARGRGRAITLIGVFVNETVERIRDIASSCGLDGVQLSGDEPVIYADALAPLLVIKAVRFDDSAQERAWLIHDQAHVQLLVDARVPGNYGGAGVVADWERAAELARRRSLMLAGGLTPENVADAITRVRPWGVDVSSGVESNGVKDHGKIRAFIAAARAAAR</sequence>
<comment type="catalytic activity">
    <reaction evidence="1">
        <text>N-(5-phospho-beta-D-ribosyl)anthranilate = 1-(2-carboxyphenylamino)-1-deoxy-D-ribulose 5-phosphate</text>
        <dbReference type="Rhea" id="RHEA:21540"/>
        <dbReference type="ChEBI" id="CHEBI:18277"/>
        <dbReference type="ChEBI" id="CHEBI:58613"/>
        <dbReference type="EC" id="5.3.1.24"/>
    </reaction>
</comment>
<comment type="pathway">
    <text evidence="1">Amino-acid biosynthesis; L-tryptophan biosynthesis; L-tryptophan from chorismate: step 3/5.</text>
</comment>
<comment type="similarity">
    <text evidence="1">Belongs to the TrpF family.</text>
</comment>